<accession>Q9SPK6</accession>
<organism>
    <name type="scientific">Haematococcus lacustris</name>
    <name type="common">Green alga</name>
    <name type="synonym">Haematococcus pluvialis</name>
    <dbReference type="NCBI Taxonomy" id="44745"/>
    <lineage>
        <taxon>Eukaryota</taxon>
        <taxon>Viridiplantae</taxon>
        <taxon>Chlorophyta</taxon>
        <taxon>core chlorophytes</taxon>
        <taxon>Chlorophyceae</taxon>
        <taxon>CS clade</taxon>
        <taxon>Chlamydomonadales</taxon>
        <taxon>Haematococcaceae</taxon>
        <taxon>Haematococcus</taxon>
    </lineage>
</organism>
<feature type="transit peptide" description="Chloroplast" evidence="2">
    <location>
        <begin position="1" status="less than"/>
        <end position="68"/>
    </location>
</feature>
<feature type="chain" id="PRO_0000412808" description="Beta-carotene 3-hydroxylase, chloroplastic">
    <location>
        <begin position="69"/>
        <end position="322"/>
    </location>
</feature>
<feature type="transmembrane region" description="Helical" evidence="2">
    <location>
        <begin position="118"/>
        <end position="138"/>
    </location>
</feature>
<feature type="transmembrane region" description="Helical" evidence="2">
    <location>
        <begin position="149"/>
        <end position="169"/>
    </location>
</feature>
<feature type="transmembrane region" description="Helical" evidence="2">
    <location>
        <begin position="207"/>
        <end position="227"/>
    </location>
</feature>
<feature type="transmembrane region" description="Helical" evidence="2">
    <location>
        <begin position="231"/>
        <end position="251"/>
    </location>
</feature>
<feature type="domain" description="Fatty acid hydroxylase" evidence="2">
    <location>
        <begin position="164"/>
        <end position="286"/>
    </location>
</feature>
<feature type="short sequence motif" description="Histidine box-1">
    <location>
        <begin position="177"/>
        <end position="182"/>
    </location>
</feature>
<feature type="short sequence motif" description="Histidine box-2">
    <location>
        <begin position="191"/>
        <end position="195"/>
    </location>
</feature>
<feature type="short sequence motif" description="Histidine box-3">
    <location>
        <begin position="252"/>
        <end position="257"/>
    </location>
</feature>
<feature type="short sequence motif" description="Histidine box-4">
    <location>
        <begin position="278"/>
        <end position="282"/>
    </location>
</feature>
<feature type="non-terminal residue">
    <location>
        <position position="1"/>
    </location>
</feature>
<evidence type="ECO:0000250" key="1">
    <source>
        <dbReference type="UniProtKB" id="Q9SZZ8"/>
    </source>
</evidence>
<evidence type="ECO:0000255" key="2"/>
<evidence type="ECO:0000269" key="3">
    <source>
    </source>
</evidence>
<evidence type="ECO:0000269" key="4">
    <source>
    </source>
</evidence>
<evidence type="ECO:0000305" key="5"/>
<evidence type="ECO:0000305" key="6">
    <source>
    </source>
</evidence>
<proteinExistence type="evidence at transcript level"/>
<sequence length="322" mass="34987">TFHKPVSGASALPHIGPPPHLHRSFAATTMLSKLQSISVKARRVELARDITRPKVCLHAQRCSLVRLRVAAPQTEEALGTVQAAGAGDEHSADVALQQLDRAIAERRARRKREQLSYQAAAIAASIGVSGIAIFATYLRFAMHMTVGGAVPWGEVAGTLLLVVGGALGMEMYARYAHKAIWHESPLGWLLHKSHHTPRTGPFEANDLFAIINGLPAMLLCTFGFWLPNVLGAACFGAGLGITLYGMAYMFVHDGLVHRRFPTGPIAGLPYMKRLTVAHQLHHSGKYGGAPWGMFLGPQELQHIPGAAEEVERLVLELDWSKR</sequence>
<comment type="function">
    <text evidence="1 6">Nonheme diiron monooxygenase involved in the biosynthesis of astaxanthin. Hydroxylates beta-ring of beta-carotene and catalyzes the conversion of canthaxanthin to astaxanthin. Uses ferredoxin as an electron donor.</text>
</comment>
<comment type="catalytic activity">
    <reaction evidence="1">
        <text>all-trans-beta-carotene + 4 reduced [2Fe-2S]-[ferredoxin] + 2 O2 + 4 H(+) = all-trans-zeaxanthin + 4 oxidized [2Fe-2S]-[ferredoxin] + 2 H2O</text>
        <dbReference type="Rhea" id="RHEA:30331"/>
        <dbReference type="Rhea" id="RHEA-COMP:10000"/>
        <dbReference type="Rhea" id="RHEA-COMP:10001"/>
        <dbReference type="ChEBI" id="CHEBI:15377"/>
        <dbReference type="ChEBI" id="CHEBI:15378"/>
        <dbReference type="ChEBI" id="CHEBI:15379"/>
        <dbReference type="ChEBI" id="CHEBI:17579"/>
        <dbReference type="ChEBI" id="CHEBI:27547"/>
        <dbReference type="ChEBI" id="CHEBI:33737"/>
        <dbReference type="ChEBI" id="CHEBI:33738"/>
        <dbReference type="EC" id="1.14.15.24"/>
    </reaction>
</comment>
<comment type="subcellular location">
    <subcellularLocation>
        <location evidence="5">Plastid</location>
        <location evidence="5">Chloroplast membrane</location>
        <topology evidence="5">Multi-pass membrane protein</topology>
    </subcellularLocation>
</comment>
<comment type="developmental stage">
    <text evidence="3">Not detected in vegetative cells. Up-regulated during cyst cell formation.</text>
</comment>
<comment type="induction">
    <text evidence="4">Up-regulated by moderate light in correlation with the redox state of the photosynthetic electron transport.</text>
</comment>
<comment type="domain">
    <text>The histidine box domains may contain the active site and/or be involved in iron binding.</text>
</comment>
<comment type="similarity">
    <text evidence="5">Belongs to the sterol desaturase family.</text>
</comment>
<reference key="1">
    <citation type="journal article" date="1999" name="Biochim. Biophys. Acta">
        <title>Carotenoid hydroxylase from Haematococcus pluvialis: cDNA sequence, regulation and functional complementation.</title>
        <authorList>
            <person name="Linden H."/>
        </authorList>
    </citation>
    <scope>NUCLEOTIDE SEQUENCE [MRNA]</scope>
    <scope>FUNCTION</scope>
    <scope>DEVELOPMENTAL STAGE</scope>
</reference>
<reference key="2">
    <citation type="journal article" date="2003" name="Plant Mol. Biol.">
        <title>Light induction of carotenoid biosynthesis genes in the green alga Haematococcus pluvialis: regulation by photosynthetic redox control.</title>
        <authorList>
            <person name="Steinbrenner J."/>
            <person name="Linden H."/>
        </authorList>
    </citation>
    <scope>INDUCTION BY LIGHT</scope>
</reference>
<dbReference type="EC" id="1.14.15.24" evidence="1"/>
<dbReference type="EMBL" id="AF162276">
    <property type="protein sequence ID" value="AAD54243.1"/>
    <property type="molecule type" value="mRNA"/>
</dbReference>
<dbReference type="KEGG" id="ag:AAD54243"/>
<dbReference type="BioCyc" id="MetaCyc:MONOMER-19182"/>
<dbReference type="BRENDA" id="1.14.15.24">
    <property type="organism ID" value="2522"/>
</dbReference>
<dbReference type="GO" id="GO:0031969">
    <property type="term" value="C:chloroplast membrane"/>
    <property type="evidence" value="ECO:0007669"/>
    <property type="project" value="UniProtKB-SubCell"/>
</dbReference>
<dbReference type="GO" id="GO:0010291">
    <property type="term" value="F:beta-carotene 3-hydroxylase activity"/>
    <property type="evidence" value="ECO:0007669"/>
    <property type="project" value="UniProtKB-EC"/>
</dbReference>
<dbReference type="GO" id="GO:0016787">
    <property type="term" value="F:hydrolase activity"/>
    <property type="evidence" value="ECO:0007669"/>
    <property type="project" value="UniProtKB-KW"/>
</dbReference>
<dbReference type="GO" id="GO:0005506">
    <property type="term" value="F:iron ion binding"/>
    <property type="evidence" value="ECO:0007669"/>
    <property type="project" value="InterPro"/>
</dbReference>
<dbReference type="GO" id="GO:0016119">
    <property type="term" value="P:carotene metabolic process"/>
    <property type="evidence" value="ECO:0007669"/>
    <property type="project" value="TreeGrafter"/>
</dbReference>
<dbReference type="GO" id="GO:0016123">
    <property type="term" value="P:xanthophyll biosynthetic process"/>
    <property type="evidence" value="ECO:0007669"/>
    <property type="project" value="TreeGrafter"/>
</dbReference>
<dbReference type="InterPro" id="IPR045019">
    <property type="entry name" value="BETA-OHASE-like"/>
</dbReference>
<dbReference type="InterPro" id="IPR006694">
    <property type="entry name" value="Fatty_acid_hydroxylase"/>
</dbReference>
<dbReference type="PANTHER" id="PTHR31899">
    <property type="entry name" value="BETA-CAROTENE 3-HYDROXYLASE 1, CHLOROPLASTIC"/>
    <property type="match status" value="1"/>
</dbReference>
<dbReference type="PANTHER" id="PTHR31899:SF9">
    <property type="entry name" value="BETA-CAROTENE 3-HYDROXYLASE 1, CHLOROPLASTIC"/>
    <property type="match status" value="1"/>
</dbReference>
<dbReference type="Pfam" id="PF04116">
    <property type="entry name" value="FA_hydroxylase"/>
    <property type="match status" value="1"/>
</dbReference>
<protein>
    <recommendedName>
        <fullName>Beta-carotene 3-hydroxylase, chloroplastic</fullName>
        <ecNumber evidence="1">1.14.15.24</ecNumber>
    </recommendedName>
</protein>
<keyword id="KW-0125">Carotenoid biosynthesis</keyword>
<keyword id="KW-0150">Chloroplast</keyword>
<keyword id="KW-0378">Hydrolase</keyword>
<keyword id="KW-0408">Iron</keyword>
<keyword id="KW-0472">Membrane</keyword>
<keyword id="KW-0479">Metal-binding</keyword>
<keyword id="KW-0520">NAD</keyword>
<keyword id="KW-0560">Oxidoreductase</keyword>
<keyword id="KW-0934">Plastid</keyword>
<keyword id="KW-0809">Transit peptide</keyword>
<keyword id="KW-0812">Transmembrane</keyword>
<keyword id="KW-1133">Transmembrane helix</keyword>
<name>BCH_HAELA</name>
<gene>
    <name type="primary">CRTZ</name>
</gene>